<accession>P16404</accession>
<comment type="function">
    <text>Galactose and N-acetyllactosamine specific lectin. Binds to the H-2 blood type determinant fucosyl-N-acetyllactosamine.</text>
</comment>
<comment type="subunit">
    <text>Homodimer.</text>
</comment>
<comment type="PTM">
    <text evidence="2">A minor C-terminal proteolytic processing site is observed at position 268.</text>
</comment>
<comment type="miscellaneous">
    <text>Binds one manganese (or another transition metal) ion and one calcium ion.</text>
</comment>
<comment type="similarity">
    <text evidence="3">Belongs to the leguminous lectin family.</text>
</comment>
<sequence>MATYKLCSVLALSLTLFLLILNKVNSVETISFSFSEFEPGNDNLTLQGAALITQSGVLQLTKINQNGMPAWDSTGRTLYAKPVHIWDMTTGTVASFETRFSFSIEQPYTRPLPADGLVFFMGPTKSKPAQGYGYLGIFNNSKQDNSYQTLGVEFDTFSNPWDPPQVPHIGIDVNSIRSIKTQPFQLDNGQVANVVIKYDASSKILHAVLVYPSSGAIYTIAEIVDVKQVLPEWVDVGLSGATGAQRDAAETHDVYSWSFQASLPETNDAVIPTSNHNTFAI</sequence>
<dbReference type="EMBL" id="X52782">
    <property type="protein sequence ID" value="CAA36986.1"/>
    <property type="molecule type" value="mRNA"/>
</dbReference>
<dbReference type="PIR" id="S09697">
    <property type="entry name" value="S09697"/>
</dbReference>
<dbReference type="PDB" id="1AX0">
    <property type="method" value="X-ray"/>
    <property type="resolution" value="1.90 A"/>
    <property type="chains" value="A=27-265"/>
</dbReference>
<dbReference type="PDB" id="1AX1">
    <property type="method" value="X-ray"/>
    <property type="resolution" value="1.95 A"/>
    <property type="chains" value="A=27-265"/>
</dbReference>
<dbReference type="PDB" id="1AX2">
    <property type="method" value="X-ray"/>
    <property type="resolution" value="1.95 A"/>
    <property type="chains" value="A=27-265"/>
</dbReference>
<dbReference type="PDB" id="1AXY">
    <property type="method" value="X-ray"/>
    <property type="resolution" value="1.95 A"/>
    <property type="chains" value="A=27-265"/>
</dbReference>
<dbReference type="PDB" id="1AXZ">
    <property type="method" value="X-ray"/>
    <property type="resolution" value="1.95 A"/>
    <property type="chains" value="A=27-265"/>
</dbReference>
<dbReference type="PDB" id="1FYU">
    <property type="method" value="X-ray"/>
    <property type="resolution" value="2.60 A"/>
    <property type="chains" value="A/B=27-281"/>
</dbReference>
<dbReference type="PDB" id="1LTE">
    <property type="method" value="X-ray"/>
    <property type="resolution" value="2.00 A"/>
    <property type="chains" value="A=27-265"/>
</dbReference>
<dbReference type="PDB" id="1SFY">
    <property type="method" value="X-ray"/>
    <property type="resolution" value="2.55 A"/>
    <property type="chains" value="A/B/C/D/E/F=27-265"/>
</dbReference>
<dbReference type="PDB" id="3N35">
    <property type="method" value="X-ray"/>
    <property type="resolution" value="2.00 A"/>
    <property type="chains" value="A=27-268"/>
</dbReference>
<dbReference type="PDB" id="3N36">
    <property type="method" value="X-ray"/>
    <property type="resolution" value="2.30 A"/>
    <property type="chains" value="A=27-268"/>
</dbReference>
<dbReference type="PDB" id="3N3H">
    <property type="method" value="X-ray"/>
    <property type="resolution" value="2.00 A"/>
    <property type="chains" value="A=27-268"/>
</dbReference>
<dbReference type="PDBsum" id="1AX0"/>
<dbReference type="PDBsum" id="1AX1"/>
<dbReference type="PDBsum" id="1AX2"/>
<dbReference type="PDBsum" id="1AXY"/>
<dbReference type="PDBsum" id="1AXZ"/>
<dbReference type="PDBsum" id="1FYU"/>
<dbReference type="PDBsum" id="1LTE"/>
<dbReference type="PDBsum" id="1SFY"/>
<dbReference type="PDBsum" id="3N35"/>
<dbReference type="PDBsum" id="3N36"/>
<dbReference type="PDBsum" id="3N3H"/>
<dbReference type="SMR" id="P16404"/>
<dbReference type="UniLectin" id="P16404"/>
<dbReference type="GlyConnect" id="332">
    <property type="glycosylation" value="1 N-Linked glycan"/>
</dbReference>
<dbReference type="iPTMnet" id="P16404"/>
<dbReference type="EvolutionaryTrace" id="P16404"/>
<dbReference type="GO" id="GO:0030246">
    <property type="term" value="F:carbohydrate binding"/>
    <property type="evidence" value="ECO:0007669"/>
    <property type="project" value="UniProtKB-KW"/>
</dbReference>
<dbReference type="CDD" id="cd06899">
    <property type="entry name" value="lectin_legume_LecRK_Arcelin_ConA"/>
    <property type="match status" value="1"/>
</dbReference>
<dbReference type="Gene3D" id="2.60.120.200">
    <property type="match status" value="1"/>
</dbReference>
<dbReference type="InterPro" id="IPR013320">
    <property type="entry name" value="ConA-like_dom_sf"/>
</dbReference>
<dbReference type="InterPro" id="IPR016363">
    <property type="entry name" value="L-lectin"/>
</dbReference>
<dbReference type="InterPro" id="IPR000985">
    <property type="entry name" value="Lectin_LegA_CS"/>
</dbReference>
<dbReference type="InterPro" id="IPR019825">
    <property type="entry name" value="Lectin_legB_Mn/Ca_BS"/>
</dbReference>
<dbReference type="InterPro" id="IPR001220">
    <property type="entry name" value="Legume_lectin_dom"/>
</dbReference>
<dbReference type="InterPro" id="IPR050258">
    <property type="entry name" value="Leguminous_Lectin"/>
</dbReference>
<dbReference type="PANTHER" id="PTHR32401">
    <property type="entry name" value="CONCANAVALIN A-LIKE LECTIN FAMILY PROTEIN"/>
    <property type="match status" value="1"/>
</dbReference>
<dbReference type="PANTHER" id="PTHR32401:SF45">
    <property type="entry name" value="LECTIN"/>
    <property type="match status" value="1"/>
</dbReference>
<dbReference type="Pfam" id="PF00139">
    <property type="entry name" value="Lectin_legB"/>
    <property type="match status" value="1"/>
</dbReference>
<dbReference type="PIRSF" id="PIRSF002690">
    <property type="entry name" value="L-type_lectin_plant"/>
    <property type="match status" value="1"/>
</dbReference>
<dbReference type="SUPFAM" id="SSF49899">
    <property type="entry name" value="Concanavalin A-like lectins/glucanases"/>
    <property type="match status" value="1"/>
</dbReference>
<dbReference type="PROSITE" id="PS00308">
    <property type="entry name" value="LECTIN_LEGUME_ALPHA"/>
    <property type="match status" value="1"/>
</dbReference>
<dbReference type="PROSITE" id="PS00307">
    <property type="entry name" value="LECTIN_LEGUME_BETA"/>
    <property type="match status" value="1"/>
</dbReference>
<feature type="signal peptide" evidence="1 2">
    <location>
        <begin position="1"/>
        <end position="26"/>
    </location>
</feature>
<feature type="chain" id="PRO_0000017617" description="Lectin">
    <location>
        <begin position="27"/>
        <end position="268"/>
    </location>
</feature>
<feature type="propeptide" id="PRO_0000017618">
    <location>
        <begin position="269"/>
        <end position="281"/>
    </location>
</feature>
<feature type="glycosylation site" description="N-linked (GlcNAc...) asparagine" evidence="2">
    <location>
        <position position="43"/>
    </location>
</feature>
<feature type="glycosylation site" description="N-linked (GlcNAc...) asparagine" evidence="2">
    <location>
        <position position="139"/>
    </location>
</feature>
<feature type="sequence variant">
    <original>G</original>
    <variation>A</variation>
    <location>
        <position position="48"/>
    </location>
</feature>
<feature type="sequence variant" evidence="2">
    <original>P</original>
    <variation>Q</variation>
    <location>
        <position position="160"/>
    </location>
</feature>
<feature type="sequence variant">
    <original>D</original>
    <variation>V</variation>
    <location>
        <position position="225"/>
    </location>
</feature>
<feature type="sequence conflict" description="In Ref. 2; AA sequence." evidence="3" ref="2">
    <original>AALITQ</original>
    <variation>DSIPET</variation>
    <location>
        <begin position="49"/>
        <end position="54"/>
    </location>
</feature>
<feature type="sequence conflict" description="In Ref. 2; AA sequence." evidence="3" ref="2">
    <original>N</original>
    <variation>F</variation>
    <location>
        <position position="139"/>
    </location>
</feature>
<feature type="strand" evidence="4">
    <location>
        <begin position="28"/>
        <end position="36"/>
    </location>
</feature>
<feature type="strand" evidence="4">
    <location>
        <begin position="42"/>
        <end position="48"/>
    </location>
</feature>
<feature type="strand" evidence="4">
    <location>
        <begin position="58"/>
        <end position="61"/>
    </location>
</feature>
<feature type="strand" evidence="5">
    <location>
        <begin position="67"/>
        <end position="69"/>
    </location>
</feature>
<feature type="strand" evidence="4">
    <location>
        <begin position="74"/>
        <end position="81"/>
    </location>
</feature>
<feature type="turn" evidence="4">
    <location>
        <begin position="88"/>
        <end position="90"/>
    </location>
</feature>
<feature type="strand" evidence="4">
    <location>
        <begin position="95"/>
        <end position="103"/>
    </location>
</feature>
<feature type="strand" evidence="4">
    <location>
        <begin position="109"/>
        <end position="111"/>
    </location>
</feature>
<feature type="strand" evidence="4">
    <location>
        <begin position="115"/>
        <end position="123"/>
    </location>
</feature>
<feature type="helix" evidence="4">
    <location>
        <begin position="132"/>
        <end position="134"/>
    </location>
</feature>
<feature type="turn" evidence="4">
    <location>
        <begin position="135"/>
        <end position="137"/>
    </location>
</feature>
<feature type="strand" evidence="4">
    <location>
        <begin position="138"/>
        <end position="142"/>
    </location>
</feature>
<feature type="helix" evidence="4">
    <location>
        <begin position="145"/>
        <end position="147"/>
    </location>
</feature>
<feature type="strand" evidence="4">
    <location>
        <begin position="150"/>
        <end position="155"/>
    </location>
</feature>
<feature type="strand" evidence="4">
    <location>
        <begin position="166"/>
        <end position="177"/>
    </location>
</feature>
<feature type="strand" evidence="4">
    <location>
        <begin position="179"/>
        <end position="183"/>
    </location>
</feature>
<feature type="strand" evidence="4">
    <location>
        <begin position="192"/>
        <end position="199"/>
    </location>
</feature>
<feature type="turn" evidence="4">
    <location>
        <begin position="200"/>
        <end position="203"/>
    </location>
</feature>
<feature type="strand" evidence="4">
    <location>
        <begin position="204"/>
        <end position="210"/>
    </location>
</feature>
<feature type="turn" evidence="4">
    <location>
        <begin position="212"/>
        <end position="214"/>
    </location>
</feature>
<feature type="strand" evidence="4">
    <location>
        <begin position="217"/>
        <end position="223"/>
    </location>
</feature>
<feature type="helix" evidence="4">
    <location>
        <begin position="226"/>
        <end position="228"/>
    </location>
</feature>
<feature type="strand" evidence="4">
    <location>
        <begin position="232"/>
        <end position="242"/>
    </location>
</feature>
<feature type="strand" evidence="4">
    <location>
        <begin position="253"/>
        <end position="263"/>
    </location>
</feature>
<organism>
    <name type="scientific">Erythrina corallodendron</name>
    <name type="common">Coral tree</name>
    <dbReference type="NCBI Taxonomy" id="3843"/>
    <lineage>
        <taxon>Eukaryota</taxon>
        <taxon>Viridiplantae</taxon>
        <taxon>Streptophyta</taxon>
        <taxon>Embryophyta</taxon>
        <taxon>Tracheophyta</taxon>
        <taxon>Spermatophyta</taxon>
        <taxon>Magnoliopsida</taxon>
        <taxon>eudicotyledons</taxon>
        <taxon>Gunneridae</taxon>
        <taxon>Pentapetalae</taxon>
        <taxon>rosids</taxon>
        <taxon>fabids</taxon>
        <taxon>Fabales</taxon>
        <taxon>Fabaceae</taxon>
        <taxon>Papilionoideae</taxon>
        <taxon>50 kb inversion clade</taxon>
        <taxon>NPAAA clade</taxon>
        <taxon>indigoferoid/millettioid clade</taxon>
        <taxon>Phaseoleae</taxon>
        <taxon>Erythrina</taxon>
    </lineage>
</organism>
<evidence type="ECO:0000269" key="1">
    <source>
    </source>
</evidence>
<evidence type="ECO:0000269" key="2">
    <source>
    </source>
</evidence>
<evidence type="ECO:0000305" key="3"/>
<evidence type="ECO:0007829" key="4">
    <source>
        <dbReference type="PDB" id="1AX0"/>
    </source>
</evidence>
<evidence type="ECO:0007829" key="5">
    <source>
        <dbReference type="PDB" id="3N35"/>
    </source>
</evidence>
<keyword id="KW-0002">3D-structure</keyword>
<keyword id="KW-0106">Calcium</keyword>
<keyword id="KW-0903">Direct protein sequencing</keyword>
<keyword id="KW-0325">Glycoprotein</keyword>
<keyword id="KW-0430">Lectin</keyword>
<keyword id="KW-0732">Signal</keyword>
<protein>
    <recommendedName>
        <fullName>Lectin</fullName>
    </recommendedName>
    <alternativeName>
        <fullName>ECorL</fullName>
    </alternativeName>
</protein>
<reference key="1">
    <citation type="journal article" date="1990" name="FEBS Lett.">
        <title>Cloning and sequence analysis of the Erythrina corallodendron lectin cDNA.</title>
        <authorList>
            <person name="Arango R."/>
            <person name="Rozenblatt S."/>
            <person name="Sharon N."/>
        </authorList>
    </citation>
    <scope>NUCLEOTIDE SEQUENCE [MRNA]</scope>
</reference>
<reference key="2">
    <citation type="journal article" date="1989" name="FEBS Lett.">
        <title>The amino acid sequence of Erythrina corallodendron lectin and its homology with other legume lectins.</title>
        <authorList>
            <person name="Adar R."/>
            <person name="Richardson M."/>
            <person name="Lis H."/>
            <person name="Sharon N."/>
        </authorList>
    </citation>
    <scope>PROTEIN SEQUENCE OF 27-270</scope>
</reference>
<reference key="3">
    <citation type="journal article" date="1995" name="J. Biol. Chem.">
        <title>C-terminal post-translational proteolysis of plant lectins and their recombinant forms expressed in Escherichia coli. Characterization of 'ragged ends' by mass spectrometry.</title>
        <authorList>
            <person name="Young N.M."/>
            <person name="Watson D.C."/>
            <person name="Yaguchi M."/>
            <person name="Adar R."/>
            <person name="Arango R."/>
            <person name="Rodriguez-Arango E."/>
            <person name="Sharon N."/>
            <person name="Blay P.K."/>
            <person name="Thibault P."/>
        </authorList>
    </citation>
    <scope>PROTEIN SEQUENCE OF 27-55; 77-99; 126-166 AND 247-267</scope>
    <scope>VARIANT GLN-160</scope>
    <scope>PROTEOLYTIC PROCESSING</scope>
    <scope>GLYCOSYLATION</scope>
</reference>
<reference key="4">
    <citation type="journal article" date="1991" name="Science">
        <title>Structure of a legume lectin with an ordered N-linked carbohydrate in complex with lactose.</title>
        <authorList>
            <person name="Shaanan B."/>
            <person name="Lis H."/>
            <person name="Sharon N."/>
        </authorList>
    </citation>
    <scope>X-RAY CRYSTALLOGRAPHY (2.0 ANGSTROMS)</scope>
</reference>
<reference key="5">
    <citation type="journal article" date="1998" name="J. Mol. Biol.">
        <title>Structures of the Erythrina corallodendron lectin and of its complexes with mono- and disaccharides.</title>
        <authorList>
            <person name="Elgavish S."/>
            <person name="Shaanan B."/>
        </authorList>
    </citation>
    <scope>X-RAY CRYSTALLOGRAPHY (1.9 ANGSTROMS) OF 27-265</scope>
</reference>
<proteinExistence type="evidence at protein level"/>
<name>LEC_ERYCO</name>